<comment type="function">
    <text evidence="1">Participates in a DNA-damage check-point that is active prior to asymmetric division when DNA is damaged. DisA forms globular foci that rapidly scan along the chromosomes during sporulation, searching for lesions. When a lesion is present, DisA pauses at the lesion site. This triggers a cellular response that culminates in a temporary block in sporulation initiation.</text>
</comment>
<comment type="function">
    <text evidence="1">Also has diadenylate cyclase activity, catalyzing the condensation of 2 ATP molecules into cyclic di-AMP (c-di-AMP). c-di-AMP acts as a signaling molecule that couples DNA integrity with progression of sporulation. The rise in c-di-AMP level generated by DisA while scanning the chromosome, operates as a positive signal that advances sporulation; upon encountering a lesion, the DisA focus arrests at the damaged site and halts c-di-AMP synthesis.</text>
</comment>
<comment type="catalytic activity">
    <reaction evidence="1">
        <text>2 ATP = 3',3'-c-di-AMP + 2 diphosphate</text>
        <dbReference type="Rhea" id="RHEA:35655"/>
        <dbReference type="ChEBI" id="CHEBI:30616"/>
        <dbReference type="ChEBI" id="CHEBI:33019"/>
        <dbReference type="ChEBI" id="CHEBI:71500"/>
        <dbReference type="EC" id="2.7.7.85"/>
    </reaction>
</comment>
<comment type="cofactor">
    <cofactor evidence="1">
        <name>Mg(2+)</name>
        <dbReference type="ChEBI" id="CHEBI:18420"/>
    </cofactor>
</comment>
<comment type="subunit">
    <text evidence="1">Homooctamer.</text>
</comment>
<comment type="similarity">
    <text evidence="1">Belongs to the DisA family.</text>
</comment>
<feature type="chain" id="PRO_1000087445" description="DNA integrity scanning protein DisA">
    <location>
        <begin position="1"/>
        <end position="353"/>
    </location>
</feature>
<feature type="domain" description="DAC" evidence="2">
    <location>
        <begin position="6"/>
        <end position="144"/>
    </location>
</feature>
<feature type="binding site" evidence="1">
    <location>
        <position position="73"/>
    </location>
    <ligand>
        <name>ATP</name>
        <dbReference type="ChEBI" id="CHEBI:30616"/>
    </ligand>
</feature>
<feature type="binding site" evidence="1">
    <location>
        <position position="91"/>
    </location>
    <ligand>
        <name>ATP</name>
        <dbReference type="ChEBI" id="CHEBI:30616"/>
    </ligand>
</feature>
<feature type="binding site" evidence="1">
    <location>
        <begin position="104"/>
        <end position="108"/>
    </location>
    <ligand>
        <name>ATP</name>
        <dbReference type="ChEBI" id="CHEBI:30616"/>
    </ligand>
</feature>
<gene>
    <name evidence="1" type="primary">disA</name>
    <name type="ordered locus">CLI_3694</name>
</gene>
<sequence length="353" mass="39655">MRIEKDKELMNILKIMAPGTPLREGLENILRAKTGGLLILGDSDQILKLVDGGFKINSEYSPSYVYELAKMDGSIVLSSDLKKILCANAQLIPDSSIPTFETGTRHRTADRVAKQTGAIVIAISQRRNIITVYKGGIKYVLRDSSIILARANQALQTLEKYVAVLDRVVNNLNILEFKDIATLFDVVTAIQRSEMVMRIVSEIERYICELGNEGRLIDMQLSELIKSVEEDGILLIRDYCRSNMEYEDIYKQIQGLSSEELLNLDGLSKIIGYTGVPLVDTLISPRGYRMINKIPRIPSNVIENLVANFNQLKCVMEASYEQLDNVEGIGEARAKAIKNGLRRLREQIMLDKV</sequence>
<dbReference type="EC" id="2.7.7.85" evidence="1"/>
<dbReference type="EMBL" id="CP000728">
    <property type="protein sequence ID" value="ABS41515.1"/>
    <property type="molecule type" value="Genomic_DNA"/>
</dbReference>
<dbReference type="RefSeq" id="WP_003393302.1">
    <property type="nucleotide sequence ID" value="NC_009699.1"/>
</dbReference>
<dbReference type="SMR" id="A7GJA2"/>
<dbReference type="GeneID" id="5187763"/>
<dbReference type="KEGG" id="cbf:CLI_3694"/>
<dbReference type="HOGENOM" id="CLU_787128_0_0_9"/>
<dbReference type="Proteomes" id="UP000002410">
    <property type="component" value="Chromosome"/>
</dbReference>
<dbReference type="GO" id="GO:0004016">
    <property type="term" value="F:adenylate cyclase activity"/>
    <property type="evidence" value="ECO:0007669"/>
    <property type="project" value="TreeGrafter"/>
</dbReference>
<dbReference type="GO" id="GO:0005524">
    <property type="term" value="F:ATP binding"/>
    <property type="evidence" value="ECO:0007669"/>
    <property type="project" value="UniProtKB-UniRule"/>
</dbReference>
<dbReference type="GO" id="GO:0106408">
    <property type="term" value="F:diadenylate cyclase activity"/>
    <property type="evidence" value="ECO:0007669"/>
    <property type="project" value="UniProtKB-EC"/>
</dbReference>
<dbReference type="GO" id="GO:0003677">
    <property type="term" value="F:DNA binding"/>
    <property type="evidence" value="ECO:0007669"/>
    <property type="project" value="UniProtKB-UniRule"/>
</dbReference>
<dbReference type="GO" id="GO:0006281">
    <property type="term" value="P:DNA repair"/>
    <property type="evidence" value="ECO:0007669"/>
    <property type="project" value="UniProtKB-UniRule"/>
</dbReference>
<dbReference type="FunFam" id="1.10.150.20:FF:000023">
    <property type="entry name" value="DNA integrity scanning protein DisA"/>
    <property type="match status" value="1"/>
</dbReference>
<dbReference type="FunFam" id="3.40.1700.10:FF:000001">
    <property type="entry name" value="DNA integrity scanning protein DisA"/>
    <property type="match status" value="1"/>
</dbReference>
<dbReference type="Gene3D" id="1.10.150.20">
    <property type="entry name" value="5' to 3' exonuclease, C-terminal subdomain"/>
    <property type="match status" value="1"/>
</dbReference>
<dbReference type="Gene3D" id="1.20.1260.110">
    <property type="entry name" value="DNA integrity scanning linker region"/>
    <property type="match status" value="1"/>
</dbReference>
<dbReference type="Gene3D" id="3.40.1700.10">
    <property type="entry name" value="DNA integrity scanning protein, DisA, N-terminal domain"/>
    <property type="match status" value="1"/>
</dbReference>
<dbReference type="HAMAP" id="MF_01438">
    <property type="entry name" value="DisA"/>
    <property type="match status" value="1"/>
</dbReference>
<dbReference type="InterPro" id="IPR050338">
    <property type="entry name" value="DisA"/>
</dbReference>
<dbReference type="InterPro" id="IPR038331">
    <property type="entry name" value="DisA_sf"/>
</dbReference>
<dbReference type="InterPro" id="IPR036888">
    <property type="entry name" value="DNA_integrity_DisA_N_sf"/>
</dbReference>
<dbReference type="InterPro" id="IPR018906">
    <property type="entry name" value="DNA_integrity_scan_DisA_link"/>
</dbReference>
<dbReference type="InterPro" id="IPR003390">
    <property type="entry name" value="DNA_integrity_scan_DisA_N"/>
</dbReference>
<dbReference type="InterPro" id="IPR023763">
    <property type="entry name" value="DNA_integrity_scanning_protein"/>
</dbReference>
<dbReference type="InterPro" id="IPR010994">
    <property type="entry name" value="RuvA_2-like"/>
</dbReference>
<dbReference type="NCBIfam" id="NF010009">
    <property type="entry name" value="PRK13482.1"/>
    <property type="match status" value="1"/>
</dbReference>
<dbReference type="PANTHER" id="PTHR34185">
    <property type="entry name" value="DIADENYLATE CYCLASE"/>
    <property type="match status" value="1"/>
</dbReference>
<dbReference type="PANTHER" id="PTHR34185:SF3">
    <property type="entry name" value="DNA INTEGRITY SCANNING PROTEIN DISA"/>
    <property type="match status" value="1"/>
</dbReference>
<dbReference type="Pfam" id="PF02457">
    <property type="entry name" value="DAC"/>
    <property type="match status" value="1"/>
</dbReference>
<dbReference type="Pfam" id="PF10635">
    <property type="entry name" value="DisA-linker"/>
    <property type="match status" value="1"/>
</dbReference>
<dbReference type="SUPFAM" id="SSF47781">
    <property type="entry name" value="RuvA domain 2-like"/>
    <property type="match status" value="1"/>
</dbReference>
<dbReference type="SUPFAM" id="SSF143597">
    <property type="entry name" value="YojJ-like"/>
    <property type="match status" value="1"/>
</dbReference>
<dbReference type="PROSITE" id="PS51794">
    <property type="entry name" value="DAC"/>
    <property type="match status" value="1"/>
</dbReference>
<protein>
    <recommendedName>
        <fullName evidence="1">DNA integrity scanning protein DisA</fullName>
    </recommendedName>
    <alternativeName>
        <fullName evidence="1">Cyclic di-AMP synthase</fullName>
        <shortName evidence="1">c-di-AMP synthase</shortName>
    </alternativeName>
    <alternativeName>
        <fullName evidence="1">Diadenylate cyclase</fullName>
        <ecNumber evidence="1">2.7.7.85</ecNumber>
    </alternativeName>
</protein>
<accession>A7GJA2</accession>
<proteinExistence type="inferred from homology"/>
<name>DISA_CLOBL</name>
<keyword id="KW-0067">ATP-binding</keyword>
<keyword id="KW-0227">DNA damage</keyword>
<keyword id="KW-0234">DNA repair</keyword>
<keyword id="KW-0238">DNA-binding</keyword>
<keyword id="KW-0460">Magnesium</keyword>
<keyword id="KW-0547">Nucleotide-binding</keyword>
<keyword id="KW-0548">Nucleotidyltransferase</keyword>
<keyword id="KW-0808">Transferase</keyword>
<reference key="1">
    <citation type="submission" date="2007-06" db="EMBL/GenBank/DDBJ databases">
        <authorList>
            <person name="Brinkac L.M."/>
            <person name="Daugherty S."/>
            <person name="Dodson R.J."/>
            <person name="Madupu R."/>
            <person name="Brown J.L."/>
            <person name="Bruce D."/>
            <person name="Detter C."/>
            <person name="Munk C."/>
            <person name="Smith L.A."/>
            <person name="Smith T.J."/>
            <person name="White O."/>
            <person name="Brettin T.S."/>
        </authorList>
    </citation>
    <scope>NUCLEOTIDE SEQUENCE [LARGE SCALE GENOMIC DNA]</scope>
    <source>
        <strain>Langeland / NCTC 10281 / Type F</strain>
    </source>
</reference>
<organism>
    <name type="scientific">Clostridium botulinum (strain Langeland / NCTC 10281 / Type F)</name>
    <dbReference type="NCBI Taxonomy" id="441772"/>
    <lineage>
        <taxon>Bacteria</taxon>
        <taxon>Bacillati</taxon>
        <taxon>Bacillota</taxon>
        <taxon>Clostridia</taxon>
        <taxon>Eubacteriales</taxon>
        <taxon>Clostridiaceae</taxon>
        <taxon>Clostridium</taxon>
    </lineage>
</organism>
<evidence type="ECO:0000255" key="1">
    <source>
        <dbReference type="HAMAP-Rule" id="MF_01438"/>
    </source>
</evidence>
<evidence type="ECO:0000255" key="2">
    <source>
        <dbReference type="PROSITE-ProRule" id="PRU01130"/>
    </source>
</evidence>